<feature type="chain" id="PRO_0000242293" description="Phosphomethylpyrimidine synthase">
    <location>
        <begin position="1"/>
        <end position="626"/>
    </location>
</feature>
<feature type="binding site" evidence="1">
    <location>
        <position position="237"/>
    </location>
    <ligand>
        <name>substrate</name>
    </ligand>
</feature>
<feature type="binding site" evidence="1">
    <location>
        <position position="266"/>
    </location>
    <ligand>
        <name>substrate</name>
    </ligand>
</feature>
<feature type="binding site" evidence="1">
    <location>
        <position position="295"/>
    </location>
    <ligand>
        <name>substrate</name>
    </ligand>
</feature>
<feature type="binding site" evidence="1">
    <location>
        <position position="331"/>
    </location>
    <ligand>
        <name>substrate</name>
    </ligand>
</feature>
<feature type="binding site" evidence="1">
    <location>
        <begin position="351"/>
        <end position="353"/>
    </location>
    <ligand>
        <name>substrate</name>
    </ligand>
</feature>
<feature type="binding site" evidence="1">
    <location>
        <begin position="392"/>
        <end position="395"/>
    </location>
    <ligand>
        <name>substrate</name>
    </ligand>
</feature>
<feature type="binding site" evidence="1">
    <location>
        <position position="431"/>
    </location>
    <ligand>
        <name>substrate</name>
    </ligand>
</feature>
<feature type="binding site" evidence="1">
    <location>
        <position position="435"/>
    </location>
    <ligand>
        <name>Zn(2+)</name>
        <dbReference type="ChEBI" id="CHEBI:29105"/>
    </ligand>
</feature>
<feature type="binding site" evidence="1">
    <location>
        <position position="458"/>
    </location>
    <ligand>
        <name>substrate</name>
    </ligand>
</feature>
<feature type="binding site" evidence="1">
    <location>
        <position position="499"/>
    </location>
    <ligand>
        <name>Zn(2+)</name>
        <dbReference type="ChEBI" id="CHEBI:29105"/>
    </ligand>
</feature>
<feature type="binding site" evidence="1">
    <location>
        <position position="579"/>
    </location>
    <ligand>
        <name>[4Fe-4S] cluster</name>
        <dbReference type="ChEBI" id="CHEBI:49883"/>
        <note>4Fe-4S-S-AdoMet</note>
    </ligand>
</feature>
<feature type="binding site" evidence="1">
    <location>
        <position position="582"/>
    </location>
    <ligand>
        <name>[4Fe-4S] cluster</name>
        <dbReference type="ChEBI" id="CHEBI:49883"/>
        <note>4Fe-4S-S-AdoMet</note>
    </ligand>
</feature>
<feature type="binding site" evidence="1">
    <location>
        <position position="587"/>
    </location>
    <ligand>
        <name>[4Fe-4S] cluster</name>
        <dbReference type="ChEBI" id="CHEBI:49883"/>
        <note>4Fe-4S-S-AdoMet</note>
    </ligand>
</feature>
<proteinExistence type="inferred from homology"/>
<organism>
    <name type="scientific">Cupriavidus pinatubonensis (strain JMP 134 / LMG 1197)</name>
    <name type="common">Cupriavidus necator (strain JMP 134)</name>
    <dbReference type="NCBI Taxonomy" id="264198"/>
    <lineage>
        <taxon>Bacteria</taxon>
        <taxon>Pseudomonadati</taxon>
        <taxon>Pseudomonadota</taxon>
        <taxon>Betaproteobacteria</taxon>
        <taxon>Burkholderiales</taxon>
        <taxon>Burkholderiaceae</taxon>
        <taxon>Cupriavidus</taxon>
    </lineage>
</organism>
<name>THIC_CUPPJ</name>
<gene>
    <name evidence="1" type="primary">thiC</name>
    <name type="ordered locus">Reut_A0205</name>
</gene>
<sequence length="626" mass="69536">MARTAPAASFESLESDLDQKFAYPASSKTYIPGSRPDIRVPMRTILQTSTRTEKGEMPNPPIPVYDTSGPYSDPDVHIDLKAGLPALREKWIAERGDTEVLPGLSSEYGRDRANDPATAHLRFAQLTNPRRAKAGANVSQMHYARKGIITPEMEYVALRESLNLQALYDKPEYKALLRQHPGNALGAGLPLRPEDITPEFVRNEIATGRAIIPANINHTELEPMAIGRNFRVKINGNLGNSAVTSSLAEEVEKMVWSIRWGADTIMDLSTGKHIHETREWILRNSPVPIGTVPIYQALDKTGGIAEDLTWEMFRDTLIEQAEQGVDYFTIHAGVLLRYVPLTADRVTGIVSRGGSIMAKWCLAHHKENFLYTHFDEICEIMKAYDVSFSLGDGLRPGCIADSNDDAQFGELRTLGELTAKAWKHDVQVMIEGPGHVPLQRIQANMDEELKHCYEAPFYTLGPLVTDIAPGYDHITSGIGAANIGWMGTAMLCYVTPKEHLGLPDKEDVREGIITYKIAAHAADLAKGWPGAQLRDNALSKARFEFRWEDQFNLGLDPERARSYHDATLPAEGAKIAHFCSMCGPKFCSMKITQEVRDYAASLPKEAQQGMEEKSIEFLKKGSKIYS</sequence>
<comment type="function">
    <text evidence="1">Catalyzes the synthesis of the hydroxymethylpyrimidine phosphate (HMP-P) moiety of thiamine from aminoimidazole ribotide (AIR) in a radical S-adenosyl-L-methionine (SAM)-dependent reaction.</text>
</comment>
<comment type="catalytic activity">
    <reaction evidence="1">
        <text>5-amino-1-(5-phospho-beta-D-ribosyl)imidazole + S-adenosyl-L-methionine = 4-amino-2-methyl-5-(phosphooxymethyl)pyrimidine + CO + 5'-deoxyadenosine + formate + L-methionine + 3 H(+)</text>
        <dbReference type="Rhea" id="RHEA:24840"/>
        <dbReference type="ChEBI" id="CHEBI:15378"/>
        <dbReference type="ChEBI" id="CHEBI:15740"/>
        <dbReference type="ChEBI" id="CHEBI:17245"/>
        <dbReference type="ChEBI" id="CHEBI:17319"/>
        <dbReference type="ChEBI" id="CHEBI:57844"/>
        <dbReference type="ChEBI" id="CHEBI:58354"/>
        <dbReference type="ChEBI" id="CHEBI:59789"/>
        <dbReference type="ChEBI" id="CHEBI:137981"/>
        <dbReference type="EC" id="4.1.99.17"/>
    </reaction>
</comment>
<comment type="cofactor">
    <cofactor evidence="1">
        <name>[4Fe-4S] cluster</name>
        <dbReference type="ChEBI" id="CHEBI:49883"/>
    </cofactor>
    <text evidence="1">Binds 1 [4Fe-4S] cluster per subunit. The cluster is coordinated with 3 cysteines and an exchangeable S-adenosyl-L-methionine.</text>
</comment>
<comment type="pathway">
    <text evidence="1">Cofactor biosynthesis; thiamine diphosphate biosynthesis.</text>
</comment>
<comment type="subunit">
    <text evidence="1">Homodimer.</text>
</comment>
<comment type="similarity">
    <text evidence="1">Belongs to the ThiC family.</text>
</comment>
<evidence type="ECO:0000255" key="1">
    <source>
        <dbReference type="HAMAP-Rule" id="MF_00089"/>
    </source>
</evidence>
<accession>Q476U6</accession>
<keyword id="KW-0004">4Fe-4S</keyword>
<keyword id="KW-0408">Iron</keyword>
<keyword id="KW-0411">Iron-sulfur</keyword>
<keyword id="KW-0456">Lyase</keyword>
<keyword id="KW-0479">Metal-binding</keyword>
<keyword id="KW-0949">S-adenosyl-L-methionine</keyword>
<keyword id="KW-0784">Thiamine biosynthesis</keyword>
<keyword id="KW-0862">Zinc</keyword>
<protein>
    <recommendedName>
        <fullName evidence="1">Phosphomethylpyrimidine synthase</fullName>
        <ecNumber evidence="1">4.1.99.17</ecNumber>
    </recommendedName>
    <alternativeName>
        <fullName evidence="1">Hydroxymethylpyrimidine phosphate synthase</fullName>
        <shortName evidence="1">HMP-P synthase</shortName>
        <shortName evidence="1">HMP-phosphate synthase</shortName>
        <shortName evidence="1">HMPP synthase</shortName>
    </alternativeName>
    <alternativeName>
        <fullName evidence="1">Thiamine biosynthesis protein ThiC</fullName>
    </alternativeName>
</protein>
<dbReference type="EC" id="4.1.99.17" evidence="1"/>
<dbReference type="EMBL" id="CP000090">
    <property type="protein sequence ID" value="AAZ59587.1"/>
    <property type="molecule type" value="Genomic_DNA"/>
</dbReference>
<dbReference type="SMR" id="Q476U6"/>
<dbReference type="STRING" id="264198.Reut_A0205"/>
<dbReference type="KEGG" id="reu:Reut_A0205"/>
<dbReference type="eggNOG" id="COG0422">
    <property type="taxonomic scope" value="Bacteria"/>
</dbReference>
<dbReference type="HOGENOM" id="CLU_013181_2_1_4"/>
<dbReference type="OrthoDB" id="9805897at2"/>
<dbReference type="UniPathway" id="UPA00060"/>
<dbReference type="GO" id="GO:0005829">
    <property type="term" value="C:cytosol"/>
    <property type="evidence" value="ECO:0007669"/>
    <property type="project" value="TreeGrafter"/>
</dbReference>
<dbReference type="GO" id="GO:0051539">
    <property type="term" value="F:4 iron, 4 sulfur cluster binding"/>
    <property type="evidence" value="ECO:0007669"/>
    <property type="project" value="UniProtKB-KW"/>
</dbReference>
<dbReference type="GO" id="GO:0016830">
    <property type="term" value="F:carbon-carbon lyase activity"/>
    <property type="evidence" value="ECO:0007669"/>
    <property type="project" value="InterPro"/>
</dbReference>
<dbReference type="GO" id="GO:0008270">
    <property type="term" value="F:zinc ion binding"/>
    <property type="evidence" value="ECO:0007669"/>
    <property type="project" value="UniProtKB-UniRule"/>
</dbReference>
<dbReference type="GO" id="GO:0009228">
    <property type="term" value="P:thiamine biosynthetic process"/>
    <property type="evidence" value="ECO:0007669"/>
    <property type="project" value="UniProtKB-KW"/>
</dbReference>
<dbReference type="GO" id="GO:0009229">
    <property type="term" value="P:thiamine diphosphate biosynthetic process"/>
    <property type="evidence" value="ECO:0007669"/>
    <property type="project" value="UniProtKB-UniRule"/>
</dbReference>
<dbReference type="FunFam" id="3.20.20.540:FF:000001">
    <property type="entry name" value="Phosphomethylpyrimidine synthase"/>
    <property type="match status" value="1"/>
</dbReference>
<dbReference type="Gene3D" id="6.10.250.620">
    <property type="match status" value="1"/>
</dbReference>
<dbReference type="Gene3D" id="3.20.20.540">
    <property type="entry name" value="Radical SAM ThiC family, central domain"/>
    <property type="match status" value="1"/>
</dbReference>
<dbReference type="HAMAP" id="MF_00089">
    <property type="entry name" value="ThiC"/>
    <property type="match status" value="1"/>
</dbReference>
<dbReference type="InterPro" id="IPR037509">
    <property type="entry name" value="ThiC"/>
</dbReference>
<dbReference type="InterPro" id="IPR025747">
    <property type="entry name" value="ThiC-associated_dom"/>
</dbReference>
<dbReference type="InterPro" id="IPR038521">
    <property type="entry name" value="ThiC/Bza_core_dom"/>
</dbReference>
<dbReference type="InterPro" id="IPR002817">
    <property type="entry name" value="ThiC/BzaA/B"/>
</dbReference>
<dbReference type="NCBIfam" id="NF006763">
    <property type="entry name" value="PRK09284.1"/>
    <property type="match status" value="1"/>
</dbReference>
<dbReference type="NCBIfam" id="NF009895">
    <property type="entry name" value="PRK13352.1"/>
    <property type="match status" value="1"/>
</dbReference>
<dbReference type="NCBIfam" id="TIGR00190">
    <property type="entry name" value="thiC"/>
    <property type="match status" value="1"/>
</dbReference>
<dbReference type="PANTHER" id="PTHR30557:SF1">
    <property type="entry name" value="PHOSPHOMETHYLPYRIMIDINE SYNTHASE, CHLOROPLASTIC"/>
    <property type="match status" value="1"/>
</dbReference>
<dbReference type="PANTHER" id="PTHR30557">
    <property type="entry name" value="THIAMINE BIOSYNTHESIS PROTEIN THIC"/>
    <property type="match status" value="1"/>
</dbReference>
<dbReference type="Pfam" id="PF13667">
    <property type="entry name" value="ThiC-associated"/>
    <property type="match status" value="1"/>
</dbReference>
<dbReference type="Pfam" id="PF01964">
    <property type="entry name" value="ThiC_Rad_SAM"/>
    <property type="match status" value="1"/>
</dbReference>
<dbReference type="SFLD" id="SFLDF00407">
    <property type="entry name" value="phosphomethylpyrimidine_syntha"/>
    <property type="match status" value="1"/>
</dbReference>
<dbReference type="SFLD" id="SFLDG01114">
    <property type="entry name" value="phosphomethylpyrimidine_syntha"/>
    <property type="match status" value="1"/>
</dbReference>
<dbReference type="SFLD" id="SFLDS00113">
    <property type="entry name" value="Radical_SAM_Phosphomethylpyrim"/>
    <property type="match status" value="1"/>
</dbReference>
<reference key="1">
    <citation type="journal article" date="2010" name="PLoS ONE">
        <title>The complete multipartite genome sequence of Cupriavidus necator JMP134, a versatile pollutant degrader.</title>
        <authorList>
            <person name="Lykidis A."/>
            <person name="Perez-Pantoja D."/>
            <person name="Ledger T."/>
            <person name="Mavromatis K."/>
            <person name="Anderson I.J."/>
            <person name="Ivanova N.N."/>
            <person name="Hooper S.D."/>
            <person name="Lapidus A."/>
            <person name="Lucas S."/>
            <person name="Gonzalez B."/>
            <person name="Kyrpides N.C."/>
        </authorList>
    </citation>
    <scope>NUCLEOTIDE SEQUENCE [LARGE SCALE GENOMIC DNA]</scope>
    <source>
        <strain>JMP134 / LMG 1197</strain>
    </source>
</reference>